<geneLocation type="chloroplast"/>
<gene>
    <name evidence="1" type="primary">atpF2</name>
    <name evidence="1" type="synonym">atpG</name>
</gene>
<protein>
    <recommendedName>
        <fullName evidence="1">ATP synthase subunit b', chloroplastic</fullName>
    </recommendedName>
    <alternativeName>
        <fullName evidence="1">ATP synthase F(0) sector subunit b'</fullName>
    </alternativeName>
    <alternativeName>
        <fullName evidence="1">ATPase subunit II</fullName>
    </alternativeName>
</protein>
<proteinExistence type="inferred from homology"/>
<accession>A0T0E8</accession>
<organism>
    <name type="scientific">Phaeodactylum tricornutum (strain CCAP 1055/1)</name>
    <dbReference type="NCBI Taxonomy" id="556484"/>
    <lineage>
        <taxon>Eukaryota</taxon>
        <taxon>Sar</taxon>
        <taxon>Stramenopiles</taxon>
        <taxon>Ochrophyta</taxon>
        <taxon>Bacillariophyta</taxon>
        <taxon>Bacillariophyceae</taxon>
        <taxon>Bacillariophycidae</taxon>
        <taxon>Naviculales</taxon>
        <taxon>Phaeodactylaceae</taxon>
        <taxon>Phaeodactylum</taxon>
    </lineage>
</organism>
<comment type="function">
    <text evidence="1">F(1)F(0) ATP synthase produces ATP from ADP in the presence of a proton or sodium gradient. F-type ATPases consist of two structural domains, F(1) containing the extramembraneous catalytic core and F(0) containing the membrane proton channel, linked together by a central stalk and a peripheral stalk. During catalysis, ATP synthesis in the catalytic domain of F(1) is coupled via a rotary mechanism of the central stalk subunits to proton translocation.</text>
</comment>
<comment type="function">
    <text evidence="1">Component of the F(0) channel, it forms part of the peripheral stalk, linking F(1) to F(0). The b'-subunit is a diverged and duplicated form of b found in plants and photosynthetic bacteria.</text>
</comment>
<comment type="subunit">
    <text evidence="1">F-type ATPases have 2 components, F(1) - the catalytic core - and F(0) - the membrane proton channel. F(1) has five subunits: alpha(3), beta(3), gamma(1), delta(1), epsilon(1). F(0) has four main subunits: a(1), b(1), b'(1) and c(10-14). The alpha and beta chains form an alternating ring which encloses part of the gamma chain. F(1) is attached to F(0) by a central stalk formed by the gamma and epsilon chains, while a peripheral stalk is formed by the delta, b and b' chains.</text>
</comment>
<comment type="subcellular location">
    <subcellularLocation>
        <location evidence="1">Plastid</location>
        <location evidence="1">Chloroplast thylakoid membrane</location>
        <topology evidence="1">Single-pass membrane protein</topology>
    </subcellularLocation>
</comment>
<comment type="miscellaneous">
    <text>In plastids the F-type ATPase is also known as CF(1)CF(0).</text>
</comment>
<comment type="similarity">
    <text evidence="1">Belongs to the ATPase B chain family.</text>
</comment>
<keyword id="KW-0066">ATP synthesis</keyword>
<keyword id="KW-0138">CF(0)</keyword>
<keyword id="KW-0150">Chloroplast</keyword>
<keyword id="KW-0375">Hydrogen ion transport</keyword>
<keyword id="KW-0406">Ion transport</keyword>
<keyword id="KW-0472">Membrane</keyword>
<keyword id="KW-0934">Plastid</keyword>
<keyword id="KW-1185">Reference proteome</keyword>
<keyword id="KW-0793">Thylakoid</keyword>
<keyword id="KW-0812">Transmembrane</keyword>
<keyword id="KW-1133">Transmembrane helix</keyword>
<keyword id="KW-0813">Transport</keyword>
<sequence>MINISMLISNSEVSGPGGLFDFNATLPLVAIQFILLMVLLNILLYNPLLTIIEERKEYILTNLGKASELLSEANKLTQQYEQELDNVRKEAQLEITNSQKIHKEILEVELNISQKYIDNLLDTIQKDLLAKKNIALNSLDEIVQSLCVDIEARLSI</sequence>
<name>ATPF2_PHATC</name>
<reference key="1">
    <citation type="journal article" date="2007" name="Mol. Genet. Genomics">
        <title>Chloroplast genomes of the diatoms Phaeodactylum tricornutum and Thalassiosira pseudonana: comparison with other plastid genomes of the red lineage.</title>
        <authorList>
            <person name="Oudot-Le Secq M.-P."/>
            <person name="Grimwood J."/>
            <person name="Shapiro H."/>
            <person name="Armbrust E.V."/>
            <person name="Bowler C."/>
            <person name="Green B.R."/>
        </authorList>
    </citation>
    <scope>NUCLEOTIDE SEQUENCE [LARGE SCALE GENOMIC DNA]</scope>
    <source>
        <strain>CCAP 1055/1</strain>
    </source>
</reference>
<evidence type="ECO:0000255" key="1">
    <source>
        <dbReference type="HAMAP-Rule" id="MF_01399"/>
    </source>
</evidence>
<dbReference type="EMBL" id="EF067920">
    <property type="protein sequence ID" value="ABK20646.1"/>
    <property type="molecule type" value="Genomic_DNA"/>
</dbReference>
<dbReference type="RefSeq" id="YP_874423.1">
    <property type="nucleotide sequence ID" value="NC_008588.1"/>
</dbReference>
<dbReference type="SMR" id="A0T0E8"/>
<dbReference type="STRING" id="556484.A0T0E8"/>
<dbReference type="GeneID" id="4524628"/>
<dbReference type="InParanoid" id="A0T0E8"/>
<dbReference type="Proteomes" id="UP000000759">
    <property type="component" value="Chloroplast"/>
</dbReference>
<dbReference type="GO" id="GO:0009535">
    <property type="term" value="C:chloroplast thylakoid membrane"/>
    <property type="evidence" value="ECO:0007669"/>
    <property type="project" value="UniProtKB-SubCell"/>
</dbReference>
<dbReference type="GO" id="GO:0045259">
    <property type="term" value="C:proton-transporting ATP synthase complex"/>
    <property type="evidence" value="ECO:0007669"/>
    <property type="project" value="UniProtKB-KW"/>
</dbReference>
<dbReference type="GO" id="GO:0046933">
    <property type="term" value="F:proton-transporting ATP synthase activity, rotational mechanism"/>
    <property type="evidence" value="ECO:0007669"/>
    <property type="project" value="UniProtKB-UniRule"/>
</dbReference>
<dbReference type="GO" id="GO:0046961">
    <property type="term" value="F:proton-transporting ATPase activity, rotational mechanism"/>
    <property type="evidence" value="ECO:0007669"/>
    <property type="project" value="TreeGrafter"/>
</dbReference>
<dbReference type="CDD" id="cd06503">
    <property type="entry name" value="ATP-synt_Fo_b"/>
    <property type="match status" value="1"/>
</dbReference>
<dbReference type="HAMAP" id="MF_01398">
    <property type="entry name" value="ATP_synth_b_bprime"/>
    <property type="match status" value="1"/>
</dbReference>
<dbReference type="HAMAP" id="MF_01399">
    <property type="entry name" value="ATP_synth_bprime"/>
    <property type="match status" value="1"/>
</dbReference>
<dbReference type="InterPro" id="IPR034679">
    <property type="entry name" value="ATP_synth_b"/>
</dbReference>
<dbReference type="InterPro" id="IPR002146">
    <property type="entry name" value="ATP_synth_b/b'su_bac/chlpt"/>
</dbReference>
<dbReference type="InterPro" id="IPR050059">
    <property type="entry name" value="ATP_synthase_B_chain"/>
</dbReference>
<dbReference type="PANTHER" id="PTHR33445">
    <property type="entry name" value="ATP SYNTHASE SUBUNIT B', CHLOROPLASTIC"/>
    <property type="match status" value="1"/>
</dbReference>
<dbReference type="PANTHER" id="PTHR33445:SF2">
    <property type="entry name" value="ATP SYNTHASE SUBUNIT B', CHLOROPLASTIC"/>
    <property type="match status" value="1"/>
</dbReference>
<dbReference type="Pfam" id="PF00430">
    <property type="entry name" value="ATP-synt_B"/>
    <property type="match status" value="1"/>
</dbReference>
<feature type="chain" id="PRO_0000369063" description="ATP synthase subunit b', chloroplastic">
    <location>
        <begin position="1"/>
        <end position="156"/>
    </location>
</feature>
<feature type="transmembrane region" description="Helical" evidence="1">
    <location>
        <begin position="24"/>
        <end position="44"/>
    </location>
</feature>